<accession>B4TD75</accession>
<dbReference type="EC" id="6.3.3.1" evidence="1"/>
<dbReference type="EMBL" id="CP001120">
    <property type="protein sequence ID" value="ACF68314.1"/>
    <property type="molecule type" value="Genomic_DNA"/>
</dbReference>
<dbReference type="RefSeq" id="WP_000130477.1">
    <property type="nucleotide sequence ID" value="NC_011083.1"/>
</dbReference>
<dbReference type="SMR" id="B4TD75"/>
<dbReference type="KEGG" id="seh:SeHA_C2759"/>
<dbReference type="HOGENOM" id="CLU_047116_0_0_6"/>
<dbReference type="UniPathway" id="UPA00074">
    <property type="reaction ID" value="UER00129"/>
</dbReference>
<dbReference type="Proteomes" id="UP000001866">
    <property type="component" value="Chromosome"/>
</dbReference>
<dbReference type="GO" id="GO:0005829">
    <property type="term" value="C:cytosol"/>
    <property type="evidence" value="ECO:0007669"/>
    <property type="project" value="TreeGrafter"/>
</dbReference>
<dbReference type="GO" id="GO:0005524">
    <property type="term" value="F:ATP binding"/>
    <property type="evidence" value="ECO:0007669"/>
    <property type="project" value="UniProtKB-KW"/>
</dbReference>
<dbReference type="GO" id="GO:0004637">
    <property type="term" value="F:phosphoribosylamine-glycine ligase activity"/>
    <property type="evidence" value="ECO:0007669"/>
    <property type="project" value="TreeGrafter"/>
</dbReference>
<dbReference type="GO" id="GO:0004641">
    <property type="term" value="F:phosphoribosylformylglycinamidine cyclo-ligase activity"/>
    <property type="evidence" value="ECO:0007669"/>
    <property type="project" value="UniProtKB-UniRule"/>
</dbReference>
<dbReference type="GO" id="GO:0006189">
    <property type="term" value="P:'de novo' IMP biosynthetic process"/>
    <property type="evidence" value="ECO:0007669"/>
    <property type="project" value="UniProtKB-UniRule"/>
</dbReference>
<dbReference type="GO" id="GO:0046084">
    <property type="term" value="P:adenine biosynthetic process"/>
    <property type="evidence" value="ECO:0007669"/>
    <property type="project" value="TreeGrafter"/>
</dbReference>
<dbReference type="CDD" id="cd02196">
    <property type="entry name" value="PurM"/>
    <property type="match status" value="1"/>
</dbReference>
<dbReference type="FunFam" id="3.30.1330.10:FF:000001">
    <property type="entry name" value="Phosphoribosylformylglycinamidine cyclo-ligase"/>
    <property type="match status" value="1"/>
</dbReference>
<dbReference type="FunFam" id="3.90.650.10:FF:000001">
    <property type="entry name" value="Phosphoribosylformylglycinamidine cyclo-ligase"/>
    <property type="match status" value="1"/>
</dbReference>
<dbReference type="Gene3D" id="3.90.650.10">
    <property type="entry name" value="PurM-like C-terminal domain"/>
    <property type="match status" value="1"/>
</dbReference>
<dbReference type="Gene3D" id="3.30.1330.10">
    <property type="entry name" value="PurM-like, N-terminal domain"/>
    <property type="match status" value="1"/>
</dbReference>
<dbReference type="HAMAP" id="MF_00741">
    <property type="entry name" value="AIRS"/>
    <property type="match status" value="1"/>
</dbReference>
<dbReference type="InterPro" id="IPR010918">
    <property type="entry name" value="PurM-like_C_dom"/>
</dbReference>
<dbReference type="InterPro" id="IPR036676">
    <property type="entry name" value="PurM-like_C_sf"/>
</dbReference>
<dbReference type="InterPro" id="IPR016188">
    <property type="entry name" value="PurM-like_N"/>
</dbReference>
<dbReference type="InterPro" id="IPR036921">
    <property type="entry name" value="PurM-like_N_sf"/>
</dbReference>
<dbReference type="InterPro" id="IPR004733">
    <property type="entry name" value="PurM_cligase"/>
</dbReference>
<dbReference type="NCBIfam" id="TIGR00878">
    <property type="entry name" value="purM"/>
    <property type="match status" value="1"/>
</dbReference>
<dbReference type="PANTHER" id="PTHR10520:SF12">
    <property type="entry name" value="TRIFUNCTIONAL PURINE BIOSYNTHETIC PROTEIN ADENOSINE-3"/>
    <property type="match status" value="1"/>
</dbReference>
<dbReference type="PANTHER" id="PTHR10520">
    <property type="entry name" value="TRIFUNCTIONAL PURINE BIOSYNTHETIC PROTEIN ADENOSINE-3-RELATED"/>
    <property type="match status" value="1"/>
</dbReference>
<dbReference type="Pfam" id="PF00586">
    <property type="entry name" value="AIRS"/>
    <property type="match status" value="1"/>
</dbReference>
<dbReference type="Pfam" id="PF02769">
    <property type="entry name" value="AIRS_C"/>
    <property type="match status" value="1"/>
</dbReference>
<dbReference type="SUPFAM" id="SSF56042">
    <property type="entry name" value="PurM C-terminal domain-like"/>
    <property type="match status" value="1"/>
</dbReference>
<dbReference type="SUPFAM" id="SSF55326">
    <property type="entry name" value="PurM N-terminal domain-like"/>
    <property type="match status" value="1"/>
</dbReference>
<name>PUR5_SALHS</name>
<gene>
    <name evidence="1" type="primary">purM</name>
    <name type="ordered locus">SeHA_C2759</name>
</gene>
<reference key="1">
    <citation type="journal article" date="2011" name="J. Bacteriol.">
        <title>Comparative genomics of 28 Salmonella enterica isolates: evidence for CRISPR-mediated adaptive sublineage evolution.</title>
        <authorList>
            <person name="Fricke W.F."/>
            <person name="Mammel M.K."/>
            <person name="McDermott P.F."/>
            <person name="Tartera C."/>
            <person name="White D.G."/>
            <person name="Leclerc J.E."/>
            <person name="Ravel J."/>
            <person name="Cebula T.A."/>
        </authorList>
    </citation>
    <scope>NUCLEOTIDE SEQUENCE [LARGE SCALE GENOMIC DNA]</scope>
    <source>
        <strain>SL476</strain>
    </source>
</reference>
<feature type="chain" id="PRO_1000193040" description="Phosphoribosylformylglycinamidine cyclo-ligase">
    <location>
        <begin position="1"/>
        <end position="345"/>
    </location>
</feature>
<keyword id="KW-0067">ATP-binding</keyword>
<keyword id="KW-0963">Cytoplasm</keyword>
<keyword id="KW-0436">Ligase</keyword>
<keyword id="KW-0547">Nucleotide-binding</keyword>
<keyword id="KW-0658">Purine biosynthesis</keyword>
<proteinExistence type="inferred from homology"/>
<sequence>MTDKTSLSYKDAGVDIDAGNALVDRIKGVVKKTRRPEVMGGLGGFGALCALPQKYREPVLVSGTDGVGTKLRLAMDLKRHDAIGIDLVAMCVNDLVVQGAEPLFFLDYYATGKLDVDTAASVINGIAEGCLQSGCALVGGETAEMPGMYHGEDYDVAGFCVGVVEKSEIIDGSRVAEGDVLIALGSSGPHSNGYSLVRKIIDVSGCDPQTTLLEGKPLADHLLEPTRIYVKSVLELIENVDVHAIAHLTGGGFWENIPRVLPENTQAVINESSWQWPAIFTWLQTAGNVSRHEMYRTFNCGVGMVIALSAPEADKALALLNEKGENAWKIGIIKASDSEQRVVIE</sequence>
<comment type="catalytic activity">
    <reaction evidence="1">
        <text>2-formamido-N(1)-(5-O-phospho-beta-D-ribosyl)acetamidine + ATP = 5-amino-1-(5-phospho-beta-D-ribosyl)imidazole + ADP + phosphate + H(+)</text>
        <dbReference type="Rhea" id="RHEA:23032"/>
        <dbReference type="ChEBI" id="CHEBI:15378"/>
        <dbReference type="ChEBI" id="CHEBI:30616"/>
        <dbReference type="ChEBI" id="CHEBI:43474"/>
        <dbReference type="ChEBI" id="CHEBI:137981"/>
        <dbReference type="ChEBI" id="CHEBI:147287"/>
        <dbReference type="ChEBI" id="CHEBI:456216"/>
        <dbReference type="EC" id="6.3.3.1"/>
    </reaction>
</comment>
<comment type="pathway">
    <text evidence="1">Purine metabolism; IMP biosynthesis via de novo pathway; 5-amino-1-(5-phospho-D-ribosyl)imidazole from N(2)-formyl-N(1)-(5-phospho-D-ribosyl)glycinamide: step 2/2.</text>
</comment>
<comment type="subcellular location">
    <subcellularLocation>
        <location evidence="1">Cytoplasm</location>
    </subcellularLocation>
</comment>
<comment type="similarity">
    <text evidence="1">Belongs to the AIR synthase family.</text>
</comment>
<evidence type="ECO:0000255" key="1">
    <source>
        <dbReference type="HAMAP-Rule" id="MF_00741"/>
    </source>
</evidence>
<protein>
    <recommendedName>
        <fullName evidence="1">Phosphoribosylformylglycinamidine cyclo-ligase</fullName>
        <ecNumber evidence="1">6.3.3.1</ecNumber>
    </recommendedName>
    <alternativeName>
        <fullName evidence="1">AIR synthase</fullName>
    </alternativeName>
    <alternativeName>
        <fullName evidence="1">AIRS</fullName>
    </alternativeName>
    <alternativeName>
        <fullName evidence="1">Phosphoribosyl-aminoimidazole synthetase</fullName>
    </alternativeName>
</protein>
<organism>
    <name type="scientific">Salmonella heidelberg (strain SL476)</name>
    <dbReference type="NCBI Taxonomy" id="454169"/>
    <lineage>
        <taxon>Bacteria</taxon>
        <taxon>Pseudomonadati</taxon>
        <taxon>Pseudomonadota</taxon>
        <taxon>Gammaproteobacteria</taxon>
        <taxon>Enterobacterales</taxon>
        <taxon>Enterobacteriaceae</taxon>
        <taxon>Salmonella</taxon>
    </lineage>
</organism>